<feature type="chain" id="PRO_1000061795" description="Ribosomal RNA large subunit methyltransferase H">
    <location>
        <begin position="1"/>
        <end position="159"/>
    </location>
</feature>
<feature type="binding site" evidence="1">
    <location>
        <position position="76"/>
    </location>
    <ligand>
        <name>S-adenosyl-L-methionine</name>
        <dbReference type="ChEBI" id="CHEBI:59789"/>
    </ligand>
</feature>
<feature type="binding site" evidence="1">
    <location>
        <position position="108"/>
    </location>
    <ligand>
        <name>S-adenosyl-L-methionine</name>
        <dbReference type="ChEBI" id="CHEBI:59789"/>
    </ligand>
</feature>
<feature type="binding site" evidence="1">
    <location>
        <begin position="127"/>
        <end position="132"/>
    </location>
    <ligand>
        <name>S-adenosyl-L-methionine</name>
        <dbReference type="ChEBI" id="CHEBI:59789"/>
    </ligand>
</feature>
<sequence>MNIKIVCVGKLKEKYFKDGIAEYQKRLSRFAKVEIVQVPDEKAPESLSPAQMEEVKKREGERILSKIKDKEYVYVLAIKGKERASEEFAKELKNLGTYGHSDITFVIGGSLGTSDAVNKRANDLFSFGKLTMPHQLMRLVLIEQIYRAFMINSGSPYHK</sequence>
<evidence type="ECO:0000255" key="1">
    <source>
        <dbReference type="HAMAP-Rule" id="MF_00658"/>
    </source>
</evidence>
<name>RLMH_LACDB</name>
<protein>
    <recommendedName>
        <fullName evidence="1">Ribosomal RNA large subunit methyltransferase H</fullName>
        <ecNumber evidence="1">2.1.1.177</ecNumber>
    </recommendedName>
    <alternativeName>
        <fullName evidence="1">23S rRNA (pseudouridine1915-N3)-methyltransferase</fullName>
    </alternativeName>
    <alternativeName>
        <fullName evidence="1">23S rRNA m3Psi1915 methyltransferase</fullName>
    </alternativeName>
    <alternativeName>
        <fullName evidence="1">rRNA (pseudouridine-N3-)-methyltransferase RlmH</fullName>
    </alternativeName>
</protein>
<proteinExistence type="inferred from homology"/>
<reference key="1">
    <citation type="journal article" date="2006" name="Proc. Natl. Acad. Sci. U.S.A.">
        <title>Comparative genomics of the lactic acid bacteria.</title>
        <authorList>
            <person name="Makarova K.S."/>
            <person name="Slesarev A."/>
            <person name="Wolf Y.I."/>
            <person name="Sorokin A."/>
            <person name="Mirkin B."/>
            <person name="Koonin E.V."/>
            <person name="Pavlov A."/>
            <person name="Pavlova N."/>
            <person name="Karamychev V."/>
            <person name="Polouchine N."/>
            <person name="Shakhova V."/>
            <person name="Grigoriev I."/>
            <person name="Lou Y."/>
            <person name="Rohksar D."/>
            <person name="Lucas S."/>
            <person name="Huang K."/>
            <person name="Goodstein D.M."/>
            <person name="Hawkins T."/>
            <person name="Plengvidhya V."/>
            <person name="Welker D."/>
            <person name="Hughes J."/>
            <person name="Goh Y."/>
            <person name="Benson A."/>
            <person name="Baldwin K."/>
            <person name="Lee J.-H."/>
            <person name="Diaz-Muniz I."/>
            <person name="Dosti B."/>
            <person name="Smeianov V."/>
            <person name="Wechter W."/>
            <person name="Barabote R."/>
            <person name="Lorca G."/>
            <person name="Altermann E."/>
            <person name="Barrangou R."/>
            <person name="Ganesan B."/>
            <person name="Xie Y."/>
            <person name="Rawsthorne H."/>
            <person name="Tamir D."/>
            <person name="Parker C."/>
            <person name="Breidt F."/>
            <person name="Broadbent J.R."/>
            <person name="Hutkins R."/>
            <person name="O'Sullivan D."/>
            <person name="Steele J."/>
            <person name="Unlu G."/>
            <person name="Saier M.H. Jr."/>
            <person name="Klaenhammer T."/>
            <person name="Richardson P."/>
            <person name="Kozyavkin S."/>
            <person name="Weimer B.C."/>
            <person name="Mills D.A."/>
        </authorList>
    </citation>
    <scope>NUCLEOTIDE SEQUENCE [LARGE SCALE GENOMIC DNA]</scope>
    <source>
        <strain>ATCC BAA-365 / Lb-18</strain>
    </source>
</reference>
<organism>
    <name type="scientific">Lactobacillus delbrueckii subsp. bulgaricus (strain ATCC BAA-365 / Lb-18)</name>
    <dbReference type="NCBI Taxonomy" id="321956"/>
    <lineage>
        <taxon>Bacteria</taxon>
        <taxon>Bacillati</taxon>
        <taxon>Bacillota</taxon>
        <taxon>Bacilli</taxon>
        <taxon>Lactobacillales</taxon>
        <taxon>Lactobacillaceae</taxon>
        <taxon>Lactobacillus</taxon>
    </lineage>
</organism>
<comment type="function">
    <text evidence="1">Specifically methylates the pseudouridine at position 1915 (m3Psi1915) in 23S rRNA.</text>
</comment>
<comment type="catalytic activity">
    <reaction evidence="1">
        <text>pseudouridine(1915) in 23S rRNA + S-adenosyl-L-methionine = N(3)-methylpseudouridine(1915) in 23S rRNA + S-adenosyl-L-homocysteine + H(+)</text>
        <dbReference type="Rhea" id="RHEA:42752"/>
        <dbReference type="Rhea" id="RHEA-COMP:10221"/>
        <dbReference type="Rhea" id="RHEA-COMP:10222"/>
        <dbReference type="ChEBI" id="CHEBI:15378"/>
        <dbReference type="ChEBI" id="CHEBI:57856"/>
        <dbReference type="ChEBI" id="CHEBI:59789"/>
        <dbReference type="ChEBI" id="CHEBI:65314"/>
        <dbReference type="ChEBI" id="CHEBI:74486"/>
        <dbReference type="EC" id="2.1.1.177"/>
    </reaction>
</comment>
<comment type="subunit">
    <text evidence="1">Homodimer.</text>
</comment>
<comment type="subcellular location">
    <subcellularLocation>
        <location evidence="1">Cytoplasm</location>
    </subcellularLocation>
</comment>
<comment type="similarity">
    <text evidence="1">Belongs to the RNA methyltransferase RlmH family.</text>
</comment>
<keyword id="KW-0963">Cytoplasm</keyword>
<keyword id="KW-0489">Methyltransferase</keyword>
<keyword id="KW-0698">rRNA processing</keyword>
<keyword id="KW-0949">S-adenosyl-L-methionine</keyword>
<keyword id="KW-0808">Transferase</keyword>
<accession>Q04CM2</accession>
<dbReference type="EC" id="2.1.1.177" evidence="1"/>
<dbReference type="EMBL" id="CP000412">
    <property type="protein sequence ID" value="ABJ57800.1"/>
    <property type="molecule type" value="Genomic_DNA"/>
</dbReference>
<dbReference type="RefSeq" id="WP_003623831.1">
    <property type="nucleotide sequence ID" value="NC_008529.1"/>
</dbReference>
<dbReference type="SMR" id="Q04CM2"/>
<dbReference type="KEGG" id="lbu:LBUL_0119"/>
<dbReference type="HOGENOM" id="CLU_100552_0_0_9"/>
<dbReference type="BioCyc" id="LDEL321956:LBUL_RS00550-MONOMER"/>
<dbReference type="GO" id="GO:0005737">
    <property type="term" value="C:cytoplasm"/>
    <property type="evidence" value="ECO:0007669"/>
    <property type="project" value="UniProtKB-SubCell"/>
</dbReference>
<dbReference type="GO" id="GO:0070038">
    <property type="term" value="F:rRNA (pseudouridine-N3-)-methyltransferase activity"/>
    <property type="evidence" value="ECO:0007669"/>
    <property type="project" value="UniProtKB-UniRule"/>
</dbReference>
<dbReference type="CDD" id="cd18081">
    <property type="entry name" value="RlmH-like"/>
    <property type="match status" value="1"/>
</dbReference>
<dbReference type="Gene3D" id="3.40.1280.10">
    <property type="match status" value="1"/>
</dbReference>
<dbReference type="HAMAP" id="MF_00658">
    <property type="entry name" value="23SrRNA_methyltr_H"/>
    <property type="match status" value="1"/>
</dbReference>
<dbReference type="InterPro" id="IPR029028">
    <property type="entry name" value="Alpha/beta_knot_MTases"/>
</dbReference>
<dbReference type="InterPro" id="IPR003742">
    <property type="entry name" value="RlmH-like"/>
</dbReference>
<dbReference type="InterPro" id="IPR029026">
    <property type="entry name" value="tRNA_m1G_MTases_N"/>
</dbReference>
<dbReference type="NCBIfam" id="NF000985">
    <property type="entry name" value="PRK00103.1-3"/>
    <property type="match status" value="1"/>
</dbReference>
<dbReference type="NCBIfam" id="TIGR00246">
    <property type="entry name" value="tRNA_RlmH_YbeA"/>
    <property type="match status" value="1"/>
</dbReference>
<dbReference type="PANTHER" id="PTHR33603">
    <property type="entry name" value="METHYLTRANSFERASE"/>
    <property type="match status" value="1"/>
</dbReference>
<dbReference type="PANTHER" id="PTHR33603:SF1">
    <property type="entry name" value="RIBOSOMAL RNA LARGE SUBUNIT METHYLTRANSFERASE H"/>
    <property type="match status" value="1"/>
</dbReference>
<dbReference type="Pfam" id="PF02590">
    <property type="entry name" value="SPOUT_MTase"/>
    <property type="match status" value="1"/>
</dbReference>
<dbReference type="PIRSF" id="PIRSF004505">
    <property type="entry name" value="MT_bac"/>
    <property type="match status" value="1"/>
</dbReference>
<dbReference type="SUPFAM" id="SSF75217">
    <property type="entry name" value="alpha/beta knot"/>
    <property type="match status" value="1"/>
</dbReference>
<gene>
    <name evidence="1" type="primary">rlmH</name>
    <name type="ordered locus">LBUL_0119</name>
</gene>